<accession>A4WU98</accession>
<proteinExistence type="inferred from homology"/>
<name>SYC_CERS5</name>
<reference key="1">
    <citation type="submission" date="2007-04" db="EMBL/GenBank/DDBJ databases">
        <title>Complete sequence of chromosome of Rhodobacter sphaeroides ATCC 17025.</title>
        <authorList>
            <consortium name="US DOE Joint Genome Institute"/>
            <person name="Copeland A."/>
            <person name="Lucas S."/>
            <person name="Lapidus A."/>
            <person name="Barry K."/>
            <person name="Detter J.C."/>
            <person name="Glavina del Rio T."/>
            <person name="Hammon N."/>
            <person name="Israni S."/>
            <person name="Dalin E."/>
            <person name="Tice H."/>
            <person name="Pitluck S."/>
            <person name="Chertkov O."/>
            <person name="Brettin T."/>
            <person name="Bruce D."/>
            <person name="Han C."/>
            <person name="Schmutz J."/>
            <person name="Larimer F."/>
            <person name="Land M."/>
            <person name="Hauser L."/>
            <person name="Kyrpides N."/>
            <person name="Kim E."/>
            <person name="Richardson P."/>
            <person name="Mackenzie C."/>
            <person name="Choudhary M."/>
            <person name="Donohue T.J."/>
            <person name="Kaplan S."/>
        </authorList>
    </citation>
    <scope>NUCLEOTIDE SEQUENCE [LARGE SCALE GENOMIC DNA]</scope>
    <source>
        <strain>ATCC 17025 / ATH 2.4.3</strain>
    </source>
</reference>
<dbReference type="EC" id="6.1.1.16" evidence="1"/>
<dbReference type="EMBL" id="CP000661">
    <property type="protein sequence ID" value="ABP70962.1"/>
    <property type="molecule type" value="Genomic_DNA"/>
</dbReference>
<dbReference type="SMR" id="A4WU98"/>
<dbReference type="STRING" id="349102.Rsph17025_2071"/>
<dbReference type="KEGG" id="rsq:Rsph17025_2071"/>
<dbReference type="eggNOG" id="COG0215">
    <property type="taxonomic scope" value="Bacteria"/>
</dbReference>
<dbReference type="HOGENOM" id="CLU_013528_0_1_5"/>
<dbReference type="BioCyc" id="RSPH349102:G1G8M-2138-MONOMER"/>
<dbReference type="GO" id="GO:0005829">
    <property type="term" value="C:cytosol"/>
    <property type="evidence" value="ECO:0007669"/>
    <property type="project" value="TreeGrafter"/>
</dbReference>
<dbReference type="GO" id="GO:0005524">
    <property type="term" value="F:ATP binding"/>
    <property type="evidence" value="ECO:0007669"/>
    <property type="project" value="UniProtKB-UniRule"/>
</dbReference>
<dbReference type="GO" id="GO:0004817">
    <property type="term" value="F:cysteine-tRNA ligase activity"/>
    <property type="evidence" value="ECO:0007669"/>
    <property type="project" value="UniProtKB-UniRule"/>
</dbReference>
<dbReference type="GO" id="GO:0008270">
    <property type="term" value="F:zinc ion binding"/>
    <property type="evidence" value="ECO:0007669"/>
    <property type="project" value="UniProtKB-UniRule"/>
</dbReference>
<dbReference type="GO" id="GO:0006423">
    <property type="term" value="P:cysteinyl-tRNA aminoacylation"/>
    <property type="evidence" value="ECO:0007669"/>
    <property type="project" value="UniProtKB-UniRule"/>
</dbReference>
<dbReference type="CDD" id="cd00672">
    <property type="entry name" value="CysRS_core"/>
    <property type="match status" value="1"/>
</dbReference>
<dbReference type="Gene3D" id="1.20.120.1910">
    <property type="entry name" value="Cysteine-tRNA ligase, C-terminal anti-codon recognition domain"/>
    <property type="match status" value="1"/>
</dbReference>
<dbReference type="Gene3D" id="3.40.50.620">
    <property type="entry name" value="HUPs"/>
    <property type="match status" value="1"/>
</dbReference>
<dbReference type="HAMAP" id="MF_00041">
    <property type="entry name" value="Cys_tRNA_synth"/>
    <property type="match status" value="1"/>
</dbReference>
<dbReference type="InterPro" id="IPR015803">
    <property type="entry name" value="Cys-tRNA-ligase"/>
</dbReference>
<dbReference type="InterPro" id="IPR015273">
    <property type="entry name" value="Cys-tRNA-synt_Ia_DALR"/>
</dbReference>
<dbReference type="InterPro" id="IPR024909">
    <property type="entry name" value="Cys-tRNA/MSH_ligase"/>
</dbReference>
<dbReference type="InterPro" id="IPR014729">
    <property type="entry name" value="Rossmann-like_a/b/a_fold"/>
</dbReference>
<dbReference type="InterPro" id="IPR032678">
    <property type="entry name" value="tRNA-synt_1_cat_dom"/>
</dbReference>
<dbReference type="InterPro" id="IPR009080">
    <property type="entry name" value="tRNAsynth_Ia_anticodon-bd"/>
</dbReference>
<dbReference type="NCBIfam" id="TIGR00435">
    <property type="entry name" value="cysS"/>
    <property type="match status" value="1"/>
</dbReference>
<dbReference type="PANTHER" id="PTHR10890:SF3">
    <property type="entry name" value="CYSTEINE--TRNA LIGASE, CYTOPLASMIC"/>
    <property type="match status" value="1"/>
</dbReference>
<dbReference type="PANTHER" id="PTHR10890">
    <property type="entry name" value="CYSTEINYL-TRNA SYNTHETASE"/>
    <property type="match status" value="1"/>
</dbReference>
<dbReference type="Pfam" id="PF01406">
    <property type="entry name" value="tRNA-synt_1e"/>
    <property type="match status" value="1"/>
</dbReference>
<dbReference type="PRINTS" id="PR00983">
    <property type="entry name" value="TRNASYNTHCYS"/>
</dbReference>
<dbReference type="SMART" id="SM00840">
    <property type="entry name" value="DALR_2"/>
    <property type="match status" value="1"/>
</dbReference>
<dbReference type="SUPFAM" id="SSF47323">
    <property type="entry name" value="Anticodon-binding domain of a subclass of class I aminoacyl-tRNA synthetases"/>
    <property type="match status" value="1"/>
</dbReference>
<dbReference type="SUPFAM" id="SSF52374">
    <property type="entry name" value="Nucleotidylyl transferase"/>
    <property type="match status" value="1"/>
</dbReference>
<feature type="chain" id="PRO_0000332885" description="Cysteine--tRNA ligase">
    <location>
        <begin position="1"/>
        <end position="486"/>
    </location>
</feature>
<feature type="short sequence motif" description="'HIGH' region">
    <location>
        <begin position="32"/>
        <end position="42"/>
    </location>
</feature>
<feature type="short sequence motif" description="'KMSKS' region">
    <location>
        <begin position="279"/>
        <end position="283"/>
    </location>
</feature>
<feature type="binding site" evidence="1">
    <location>
        <position position="30"/>
    </location>
    <ligand>
        <name>Zn(2+)</name>
        <dbReference type="ChEBI" id="CHEBI:29105"/>
    </ligand>
</feature>
<feature type="binding site" evidence="1">
    <location>
        <position position="221"/>
    </location>
    <ligand>
        <name>Zn(2+)</name>
        <dbReference type="ChEBI" id="CHEBI:29105"/>
    </ligand>
</feature>
<feature type="binding site" evidence="1">
    <location>
        <position position="246"/>
    </location>
    <ligand>
        <name>Zn(2+)</name>
        <dbReference type="ChEBI" id="CHEBI:29105"/>
    </ligand>
</feature>
<feature type="binding site" evidence="1">
    <location>
        <position position="250"/>
    </location>
    <ligand>
        <name>Zn(2+)</name>
        <dbReference type="ChEBI" id="CHEBI:29105"/>
    </ligand>
</feature>
<feature type="binding site" evidence="1">
    <location>
        <position position="282"/>
    </location>
    <ligand>
        <name>ATP</name>
        <dbReference type="ChEBI" id="CHEBI:30616"/>
    </ligand>
</feature>
<comment type="catalytic activity">
    <reaction evidence="1">
        <text>tRNA(Cys) + L-cysteine + ATP = L-cysteinyl-tRNA(Cys) + AMP + diphosphate</text>
        <dbReference type="Rhea" id="RHEA:17773"/>
        <dbReference type="Rhea" id="RHEA-COMP:9661"/>
        <dbReference type="Rhea" id="RHEA-COMP:9679"/>
        <dbReference type="ChEBI" id="CHEBI:30616"/>
        <dbReference type="ChEBI" id="CHEBI:33019"/>
        <dbReference type="ChEBI" id="CHEBI:35235"/>
        <dbReference type="ChEBI" id="CHEBI:78442"/>
        <dbReference type="ChEBI" id="CHEBI:78517"/>
        <dbReference type="ChEBI" id="CHEBI:456215"/>
        <dbReference type="EC" id="6.1.1.16"/>
    </reaction>
</comment>
<comment type="cofactor">
    <cofactor evidence="1">
        <name>Zn(2+)</name>
        <dbReference type="ChEBI" id="CHEBI:29105"/>
    </cofactor>
    <text evidence="1">Binds 1 zinc ion per subunit.</text>
</comment>
<comment type="subunit">
    <text evidence="1">Monomer.</text>
</comment>
<comment type="subcellular location">
    <subcellularLocation>
        <location evidence="1">Cytoplasm</location>
    </subcellularLocation>
</comment>
<comment type="similarity">
    <text evidence="1">Belongs to the class-I aminoacyl-tRNA synthetase family.</text>
</comment>
<evidence type="ECO:0000255" key="1">
    <source>
        <dbReference type="HAMAP-Rule" id="MF_00041"/>
    </source>
</evidence>
<organism>
    <name type="scientific">Cereibacter sphaeroides (strain ATCC 17025 / ATH 2.4.3)</name>
    <name type="common">Rhodobacter sphaeroides</name>
    <dbReference type="NCBI Taxonomy" id="349102"/>
    <lineage>
        <taxon>Bacteria</taxon>
        <taxon>Pseudomonadati</taxon>
        <taxon>Pseudomonadota</taxon>
        <taxon>Alphaproteobacteria</taxon>
        <taxon>Rhodobacterales</taxon>
        <taxon>Paracoccaceae</taxon>
        <taxon>Cereibacter</taxon>
    </lineage>
</organism>
<sequence length="486" mass="53809">MTTIRLTNTKTRRKEAFTPIDPANVRLYVCGPTVYDRAHLGNGRPVVVFDVLFRLLRHVYGPDHVTYVRNFTDVDDKINAAAQARKAAGDPRSLEELIRARTDETIRWYHEDMDALGALRPTHEPRATEWIGAMIAMIEDLVARGHAYEREGHVLFRVRSYRDYGALSGRSVDDMIAGARVEVAPFKEDPMDFVLWKPSDDELPGWESPWGRGRPGWHIECSAMSYELLGASFDIHAGGIDLQFPHHENEIAQSCCAHPEGGFANVWMHNEMLLVNGKKMSKSLGNFFTIHDLRKDRGIPGEVIRMVLLGTHYSKPMDWTAEKAAQAKATLWKWRKLTADVEPAASPDAAVLAALADDLNTPAAITRLHSIAAQEDGALLKASASLLGLLEDDLRGWTLPPVTGTGSGVMEVSGSATAIVGSVQYRETIERLLDERKQARMGKDFKRSDAIRDLLVGAGVIIKDTPAGAEWDLGADFDPARLGEPE</sequence>
<protein>
    <recommendedName>
        <fullName evidence="1">Cysteine--tRNA ligase</fullName>
        <ecNumber evidence="1">6.1.1.16</ecNumber>
    </recommendedName>
    <alternativeName>
        <fullName evidence="1">Cysteinyl-tRNA synthetase</fullName>
        <shortName evidence="1">CysRS</shortName>
    </alternativeName>
</protein>
<keyword id="KW-0030">Aminoacyl-tRNA synthetase</keyword>
<keyword id="KW-0067">ATP-binding</keyword>
<keyword id="KW-0963">Cytoplasm</keyword>
<keyword id="KW-0436">Ligase</keyword>
<keyword id="KW-0479">Metal-binding</keyword>
<keyword id="KW-0547">Nucleotide-binding</keyword>
<keyword id="KW-0648">Protein biosynthesis</keyword>
<keyword id="KW-0862">Zinc</keyword>
<gene>
    <name evidence="1" type="primary">cysS</name>
    <name type="ordered locus">Rsph17025_2071</name>
</gene>